<name>TILS_BACCZ</name>
<gene>
    <name evidence="1" type="primary">tilS</name>
    <name type="ordered locus">BCE33L0058</name>
</gene>
<reference key="1">
    <citation type="journal article" date="2006" name="J. Bacteriol.">
        <title>Pathogenomic sequence analysis of Bacillus cereus and Bacillus thuringiensis isolates closely related to Bacillus anthracis.</title>
        <authorList>
            <person name="Han C.S."/>
            <person name="Xie G."/>
            <person name="Challacombe J.F."/>
            <person name="Altherr M.R."/>
            <person name="Bhotika S.S."/>
            <person name="Bruce D."/>
            <person name="Campbell C.S."/>
            <person name="Campbell M.L."/>
            <person name="Chen J."/>
            <person name="Chertkov O."/>
            <person name="Cleland C."/>
            <person name="Dimitrijevic M."/>
            <person name="Doggett N.A."/>
            <person name="Fawcett J.J."/>
            <person name="Glavina T."/>
            <person name="Goodwin L.A."/>
            <person name="Hill K.K."/>
            <person name="Hitchcock P."/>
            <person name="Jackson P.J."/>
            <person name="Keim P."/>
            <person name="Kewalramani A.R."/>
            <person name="Longmire J."/>
            <person name="Lucas S."/>
            <person name="Malfatti S."/>
            <person name="McMurry K."/>
            <person name="Meincke L.J."/>
            <person name="Misra M."/>
            <person name="Moseman B.L."/>
            <person name="Mundt M."/>
            <person name="Munk A.C."/>
            <person name="Okinaka R.T."/>
            <person name="Parson-Quintana B."/>
            <person name="Reilly L.P."/>
            <person name="Richardson P."/>
            <person name="Robinson D.L."/>
            <person name="Rubin E."/>
            <person name="Saunders E."/>
            <person name="Tapia R."/>
            <person name="Tesmer J.G."/>
            <person name="Thayer N."/>
            <person name="Thompson L.S."/>
            <person name="Tice H."/>
            <person name="Ticknor L.O."/>
            <person name="Wills P.L."/>
            <person name="Brettin T.S."/>
            <person name="Gilna P."/>
        </authorList>
    </citation>
    <scope>NUCLEOTIDE SEQUENCE [LARGE SCALE GENOMIC DNA]</scope>
    <source>
        <strain>ZK / E33L</strain>
    </source>
</reference>
<organism>
    <name type="scientific">Bacillus cereus (strain ZK / E33L)</name>
    <dbReference type="NCBI Taxonomy" id="288681"/>
    <lineage>
        <taxon>Bacteria</taxon>
        <taxon>Bacillati</taxon>
        <taxon>Bacillota</taxon>
        <taxon>Bacilli</taxon>
        <taxon>Bacillales</taxon>
        <taxon>Bacillaceae</taxon>
        <taxon>Bacillus</taxon>
        <taxon>Bacillus cereus group</taxon>
    </lineage>
</organism>
<evidence type="ECO:0000255" key="1">
    <source>
        <dbReference type="HAMAP-Rule" id="MF_01161"/>
    </source>
</evidence>
<dbReference type="EC" id="6.3.4.19" evidence="1"/>
<dbReference type="EMBL" id="CP000001">
    <property type="protein sequence ID" value="AAU20172.1"/>
    <property type="molecule type" value="Genomic_DNA"/>
</dbReference>
<dbReference type="RefSeq" id="WP_000655438.1">
    <property type="nucleotide sequence ID" value="NC_006274.1"/>
</dbReference>
<dbReference type="SMR" id="Q63HD6"/>
<dbReference type="KEGG" id="bcz:BCE33L0058"/>
<dbReference type="PATRIC" id="fig|288681.22.peg.95"/>
<dbReference type="Proteomes" id="UP000002612">
    <property type="component" value="Chromosome"/>
</dbReference>
<dbReference type="GO" id="GO:0005737">
    <property type="term" value="C:cytoplasm"/>
    <property type="evidence" value="ECO:0007669"/>
    <property type="project" value="UniProtKB-SubCell"/>
</dbReference>
<dbReference type="GO" id="GO:0005524">
    <property type="term" value="F:ATP binding"/>
    <property type="evidence" value="ECO:0007669"/>
    <property type="project" value="UniProtKB-UniRule"/>
</dbReference>
<dbReference type="GO" id="GO:0032267">
    <property type="term" value="F:tRNA(Ile)-lysidine synthase activity"/>
    <property type="evidence" value="ECO:0007669"/>
    <property type="project" value="UniProtKB-EC"/>
</dbReference>
<dbReference type="GO" id="GO:0006400">
    <property type="term" value="P:tRNA modification"/>
    <property type="evidence" value="ECO:0007669"/>
    <property type="project" value="UniProtKB-UniRule"/>
</dbReference>
<dbReference type="CDD" id="cd01992">
    <property type="entry name" value="TilS_N"/>
    <property type="match status" value="1"/>
</dbReference>
<dbReference type="Gene3D" id="3.30.465.60">
    <property type="match status" value="1"/>
</dbReference>
<dbReference type="Gene3D" id="3.40.50.620">
    <property type="entry name" value="HUPs"/>
    <property type="match status" value="1"/>
</dbReference>
<dbReference type="HAMAP" id="MF_01161">
    <property type="entry name" value="tRNA_Ile_lys_synt"/>
    <property type="match status" value="1"/>
</dbReference>
<dbReference type="InterPro" id="IPR012796">
    <property type="entry name" value="Lysidine-tRNA-synth_C"/>
</dbReference>
<dbReference type="InterPro" id="IPR014729">
    <property type="entry name" value="Rossmann-like_a/b/a_fold"/>
</dbReference>
<dbReference type="InterPro" id="IPR011063">
    <property type="entry name" value="TilS/TtcA_N"/>
</dbReference>
<dbReference type="InterPro" id="IPR012094">
    <property type="entry name" value="tRNA_Ile_lys_synt"/>
</dbReference>
<dbReference type="InterPro" id="IPR012795">
    <property type="entry name" value="tRNA_Ile_lys_synt_N"/>
</dbReference>
<dbReference type="InterPro" id="IPR015262">
    <property type="entry name" value="tRNA_Ile_lys_synt_subst-bd"/>
</dbReference>
<dbReference type="NCBIfam" id="TIGR02433">
    <property type="entry name" value="lysidine_TilS_C"/>
    <property type="match status" value="1"/>
</dbReference>
<dbReference type="NCBIfam" id="TIGR02432">
    <property type="entry name" value="lysidine_TilS_N"/>
    <property type="match status" value="1"/>
</dbReference>
<dbReference type="PANTHER" id="PTHR43033">
    <property type="entry name" value="TRNA(ILE)-LYSIDINE SYNTHASE-RELATED"/>
    <property type="match status" value="1"/>
</dbReference>
<dbReference type="PANTHER" id="PTHR43033:SF1">
    <property type="entry name" value="TRNA(ILE)-LYSIDINE SYNTHASE-RELATED"/>
    <property type="match status" value="1"/>
</dbReference>
<dbReference type="Pfam" id="PF01171">
    <property type="entry name" value="ATP_bind_3"/>
    <property type="match status" value="1"/>
</dbReference>
<dbReference type="Pfam" id="PF09179">
    <property type="entry name" value="TilS"/>
    <property type="match status" value="1"/>
</dbReference>
<dbReference type="Pfam" id="PF11734">
    <property type="entry name" value="TilS_C"/>
    <property type="match status" value="1"/>
</dbReference>
<dbReference type="SMART" id="SM00977">
    <property type="entry name" value="TilS_C"/>
    <property type="match status" value="1"/>
</dbReference>
<dbReference type="SUPFAM" id="SSF52402">
    <property type="entry name" value="Adenine nucleotide alpha hydrolases-like"/>
    <property type="match status" value="1"/>
</dbReference>
<dbReference type="SUPFAM" id="SSF82829">
    <property type="entry name" value="MesJ substrate recognition domain-like"/>
    <property type="match status" value="1"/>
</dbReference>
<dbReference type="SUPFAM" id="SSF56037">
    <property type="entry name" value="PheT/TilS domain"/>
    <property type="match status" value="1"/>
</dbReference>
<protein>
    <recommendedName>
        <fullName evidence="1">tRNA(Ile)-lysidine synthase</fullName>
        <ecNumber evidence="1">6.3.4.19</ecNumber>
    </recommendedName>
    <alternativeName>
        <fullName evidence="1">tRNA(Ile)-2-lysyl-cytidine synthase</fullName>
    </alternativeName>
    <alternativeName>
        <fullName evidence="1">tRNA(Ile)-lysidine synthetase</fullName>
    </alternativeName>
</protein>
<sequence length="476" mass="54800">MKDTFVEKVDDFVKQHDVLKEHSTIVVGVSGGPDSLALLYYLLEKRAAKQFEIVVAHVDHMFRGDESHEDLQFVQDLCKGLGVICETIRINVSQYQQQYGMNAQVAARECRYAFLERIMKKYDARYVALGHHGDDQVETILMRLVRGSTPKGYAGIAVKRPFHNGYLIRPLLGVTKEEIVDYCNKLKIIPRIDPSNKKEVYTRNRLRKYVLPHLKEENPQVHEKFQKFSMQMQEDEAYLQELAFEKMNKVITKKSDKQISLSIPAFESMSMPLQRRGIQLILNYLYEYKIPSSLSSIHIDKVIEFFKRTQPSGSLDFPGDLKIVRAYEECSFGFKQEIVSPFLQDLSVPGTITLSNGDKLVTEVSEDIPSDMNETVFVAKYNDISYPLRIRSRENGDRMSIQGMNGTKKIKAIFIEAKVPREKREEWPVVCDASGNVIWLPLLKRSAFAISKETAKKDKYMIIHYKSKESSGRIMK</sequence>
<feature type="chain" id="PRO_0000181644" description="tRNA(Ile)-lysidine synthase">
    <location>
        <begin position="1"/>
        <end position="476"/>
    </location>
</feature>
<feature type="binding site" evidence="1">
    <location>
        <begin position="30"/>
        <end position="35"/>
    </location>
    <ligand>
        <name>ATP</name>
        <dbReference type="ChEBI" id="CHEBI:30616"/>
    </ligand>
</feature>
<proteinExistence type="inferred from homology"/>
<comment type="function">
    <text evidence="1">Ligates lysine onto the cytidine present at position 34 of the AUA codon-specific tRNA(Ile) that contains the anticodon CAU, in an ATP-dependent manner. Cytidine is converted to lysidine, thus changing the amino acid specificity of the tRNA from methionine to isoleucine.</text>
</comment>
<comment type="catalytic activity">
    <reaction evidence="1">
        <text>cytidine(34) in tRNA(Ile2) + L-lysine + ATP = lysidine(34) in tRNA(Ile2) + AMP + diphosphate + H(+)</text>
        <dbReference type="Rhea" id="RHEA:43744"/>
        <dbReference type="Rhea" id="RHEA-COMP:10625"/>
        <dbReference type="Rhea" id="RHEA-COMP:10670"/>
        <dbReference type="ChEBI" id="CHEBI:15378"/>
        <dbReference type="ChEBI" id="CHEBI:30616"/>
        <dbReference type="ChEBI" id="CHEBI:32551"/>
        <dbReference type="ChEBI" id="CHEBI:33019"/>
        <dbReference type="ChEBI" id="CHEBI:82748"/>
        <dbReference type="ChEBI" id="CHEBI:83665"/>
        <dbReference type="ChEBI" id="CHEBI:456215"/>
        <dbReference type="EC" id="6.3.4.19"/>
    </reaction>
</comment>
<comment type="subcellular location">
    <subcellularLocation>
        <location evidence="1">Cytoplasm</location>
    </subcellularLocation>
</comment>
<comment type="domain">
    <text>The N-terminal region contains the highly conserved SGGXDS motif, predicted to be a P-loop motif involved in ATP binding.</text>
</comment>
<comment type="similarity">
    <text evidence="1">Belongs to the tRNA(Ile)-lysidine synthase family.</text>
</comment>
<keyword id="KW-0067">ATP-binding</keyword>
<keyword id="KW-0963">Cytoplasm</keyword>
<keyword id="KW-0436">Ligase</keyword>
<keyword id="KW-0547">Nucleotide-binding</keyword>
<keyword id="KW-0819">tRNA processing</keyword>
<accession>Q63HD6</accession>